<evidence type="ECO:0000269" key="1">
    <source>
    </source>
</evidence>
<evidence type="ECO:0000305" key="2"/>
<protein>
    <recommendedName>
        <fullName>S-fimbrial protein subunit SfaG</fullName>
    </recommendedName>
</protein>
<organism>
    <name type="scientific">Escherichia coli O6:K15:H31 (strain 536 / UPEC)</name>
    <dbReference type="NCBI Taxonomy" id="362663"/>
    <lineage>
        <taxon>Bacteria</taxon>
        <taxon>Pseudomonadati</taxon>
        <taxon>Pseudomonadota</taxon>
        <taxon>Gammaproteobacteria</taxon>
        <taxon>Enterobacterales</taxon>
        <taxon>Enterobacteriaceae</taxon>
        <taxon>Escherichia</taxon>
    </lineage>
</organism>
<dbReference type="EMBL" id="X16664">
    <property type="protein sequence ID" value="CAA34652.1"/>
    <property type="molecule type" value="Genomic_DNA"/>
</dbReference>
<dbReference type="EMBL" id="CP000247">
    <property type="protein sequence ID" value="ABG68332.1"/>
    <property type="status" value="ALT_INIT"/>
    <property type="molecule type" value="Genomic_DNA"/>
</dbReference>
<dbReference type="PIR" id="S15925">
    <property type="entry name" value="S06193"/>
</dbReference>
<dbReference type="RefSeq" id="WP_000237768.1">
    <property type="nucleotide sequence ID" value="NC_008253.1"/>
</dbReference>
<dbReference type="SMR" id="P13429"/>
<dbReference type="KEGG" id="ecp:ECP_0297"/>
<dbReference type="HOGENOM" id="CLU_088965_0_2_6"/>
<dbReference type="Proteomes" id="UP000009182">
    <property type="component" value="Chromosome"/>
</dbReference>
<dbReference type="GO" id="GO:0009289">
    <property type="term" value="C:pilus"/>
    <property type="evidence" value="ECO:0007669"/>
    <property type="project" value="UniProtKB-SubCell"/>
</dbReference>
<dbReference type="GO" id="GO:0043709">
    <property type="term" value="P:cell adhesion involved in single-species biofilm formation"/>
    <property type="evidence" value="ECO:0007669"/>
    <property type="project" value="TreeGrafter"/>
</dbReference>
<dbReference type="Gene3D" id="2.60.40.1090">
    <property type="entry name" value="Fimbrial-type adhesion domain"/>
    <property type="match status" value="1"/>
</dbReference>
<dbReference type="InterPro" id="IPR000259">
    <property type="entry name" value="Adhesion_dom_fimbrial"/>
</dbReference>
<dbReference type="InterPro" id="IPR036937">
    <property type="entry name" value="Adhesion_dom_fimbrial_sf"/>
</dbReference>
<dbReference type="InterPro" id="IPR008966">
    <property type="entry name" value="Adhesion_dom_sf"/>
</dbReference>
<dbReference type="InterPro" id="IPR050263">
    <property type="entry name" value="Bact_Fimbrial_Adh_Pro"/>
</dbReference>
<dbReference type="PANTHER" id="PTHR33420">
    <property type="entry name" value="FIMBRIAL SUBUNIT ELFA-RELATED"/>
    <property type="match status" value="1"/>
</dbReference>
<dbReference type="PANTHER" id="PTHR33420:SF25">
    <property type="entry name" value="PROTEIN FIMF"/>
    <property type="match status" value="1"/>
</dbReference>
<dbReference type="Pfam" id="PF00419">
    <property type="entry name" value="Fimbrial"/>
    <property type="match status" value="1"/>
</dbReference>
<dbReference type="SUPFAM" id="SSF49401">
    <property type="entry name" value="Bacterial adhesins"/>
    <property type="match status" value="1"/>
</dbReference>
<gene>
    <name type="primary">sfaG</name>
    <name type="ordered locus">ECP_0297</name>
</gene>
<comment type="function">
    <text>Fimbriae (also called pili), polar filaments radiating from the surface of the bacterium to a length of 0.5-1.5 micrometers and numbering 100-300 per cell, enable bacteria to colonize the epithelium of specific host organs.</text>
</comment>
<comment type="function">
    <text>A minor fimbrial subunit. This protein is necessary for full expression of S-specific binding. S-fimbrial adhesins enable pathogenic E.coli causing urinary-tract infections or newborn meningitis to attach to glycoproteins terminating with alpha-sialic acid-(2-3)-beta-Gal.</text>
</comment>
<comment type="subcellular location">
    <subcellularLocation>
        <location evidence="1">Fimbrium</location>
    </subcellularLocation>
</comment>
<comment type="disruption phenotype">
    <text evidence="1">Deletion decreases hemagglutination but no decrease in fimbriation levels.</text>
</comment>
<comment type="similarity">
    <text evidence="2">Belongs to the fimbrial protein family.</text>
</comment>
<comment type="sequence caution" evidence="2">
    <conflict type="erroneous initiation">
        <sequence resource="EMBL-CDS" id="ABG68332"/>
    </conflict>
    <text>Truncated N-terminus.</text>
</comment>
<accession>P13429</accession>
<accession>Q0TL49</accession>
<feature type="signal peptide">
    <location>
        <begin position="1"/>
        <end position="27"/>
    </location>
</feature>
<feature type="chain" id="PRO_0000009201" description="S-fimbrial protein subunit SfaG">
    <location>
        <begin position="28"/>
        <end position="175"/>
    </location>
</feature>
<feature type="disulfide bond" evidence="2">
    <location>
        <begin position="43"/>
        <end position="83"/>
    </location>
</feature>
<name>SFAG_ECOL5</name>
<keyword id="KW-1015">Disulfide bond</keyword>
<keyword id="KW-0281">Fimbrium</keyword>
<keyword id="KW-0732">Signal</keyword>
<proteinExistence type="evidence at protein level"/>
<reference key="1">
    <citation type="journal article" date="1989" name="Mol. Microbiol.">
        <title>Analysis of genes coding for the sialic acid-binding adhesin and two other minor fimbrial subunits of the S-fimbrial adhesin determinant of Escherichia coli.</title>
        <authorList>
            <person name="Schmoll T."/>
            <person name="Hoschuetzky H."/>
            <person name="Morschhaeuser J."/>
            <person name="Lottspeich F."/>
            <person name="Jann K."/>
            <person name="Hacker J."/>
        </authorList>
    </citation>
    <scope>NUCLEOTIDE SEQUENCE [GENOMIC DNA]</scope>
    <scope>SUBCELLULAR LOCATION</scope>
    <scope>IDENTIFICATION IN FIMBRIAE COMPLEX</scope>
    <scope>DISRUPTION PHENOTYPE</scope>
</reference>
<reference key="2">
    <citation type="journal article" date="2006" name="Mol. Microbiol.">
        <title>Role of pathogenicity island-associated integrases in the genome plasticity of uropathogenic Escherichia coli strain 536.</title>
        <authorList>
            <person name="Hochhut B."/>
            <person name="Wilde C."/>
            <person name="Balling G."/>
            <person name="Middendorf B."/>
            <person name="Dobrindt U."/>
            <person name="Brzuszkiewicz E."/>
            <person name="Gottschalk G."/>
            <person name="Carniel E."/>
            <person name="Hacker J."/>
        </authorList>
    </citation>
    <scope>NUCLEOTIDE SEQUENCE [LARGE SCALE GENOMIC DNA]</scope>
    <source>
        <strain>536 / UPEC</strain>
    </source>
</reference>
<sequence length="175" mass="18581">MVKDIIKTVTFSCMLAGSMFVTCHVCAAGSVVNITGNVQDNTCDVDINSRNFDVSLGSYDSRQFTAAGDTTPASVFHVGLTSCGSAVRAVKLTFTGTPDNQEAGLIQINSINGARGVGIQLLDKDKHELKINVPTTIALMPGTQTIAFYARLKATYLPVKAGNVDAVVNFVLDYQ</sequence>